<evidence type="ECO:0000250" key="1">
    <source>
        <dbReference type="UniProtKB" id="B0VXW0"/>
    </source>
</evidence>
<evidence type="ECO:0000250" key="2">
    <source>
        <dbReference type="UniProtKB" id="P0CC17"/>
    </source>
</evidence>
<evidence type="ECO:0000250" key="3">
    <source>
        <dbReference type="UniProtKB" id="P0DQH9"/>
    </source>
</evidence>
<evidence type="ECO:0000250" key="4">
    <source>
        <dbReference type="UniProtKB" id="P81382"/>
    </source>
</evidence>
<evidence type="ECO:0000250" key="5">
    <source>
        <dbReference type="UniProtKB" id="Q6STF1"/>
    </source>
</evidence>
<evidence type="ECO:0000255" key="6">
    <source>
        <dbReference type="PROSITE-ProRule" id="PRU00498"/>
    </source>
</evidence>
<evidence type="ECO:0000269" key="7">
    <source>
    </source>
</evidence>
<evidence type="ECO:0000269" key="8">
    <source>
    </source>
</evidence>
<evidence type="ECO:0000303" key="9">
    <source>
    </source>
</evidence>
<evidence type="ECO:0000305" key="10">
    <source>
    </source>
</evidence>
<sequence>MNVFFMFSLLFLAALESCADDKNPLEEEFFEADYEEFLLIAKNGLQQTSNPKRVVIVGAGMSGLSAAYVLAKTGHEVILLEASERVGGRVSTYRNDQEGWYANLGPMRLPERHRIVREYIRKFGLQLNEFSQENENAWYFIKNIRKRVGEVNKDPGVLEYPVKPSEKGKSAPQLYRDSLQKIIEEYGRSNCSYILNKYDTYSTKDYLIKEGNLSPGAVDMVGDLLNEDSGYYVSFIESLKPDDIFAYENRFDEIVGGFDKLPTSMYQAIQEKVRLNVRVIKIQQDVKEVTVTYQTPAKNLSYVTADYVIVCTTSGAARRIKFEPPLPLKKAHALRSVHYRSGTKIFLTCTKKFWEDDGIHGGKSITDRPSRLIHYPNHNFPNGIGVLVIFTIADDADFFLALDNKTIADIVIHDLSLIHQLPKEKIRDLCYVSMIQKWSLDKYAMGGITTFTPYQFQHFSEALTAPVDRIYFAGEYTAQAHGWIDSTIKSGLTAARDVNRASENPSGIHLSNDNEL</sequence>
<keyword id="KW-0044">Antibiotic</keyword>
<keyword id="KW-0929">Antimicrobial</keyword>
<keyword id="KW-0903">Direct protein sequencing</keyword>
<keyword id="KW-1015">Disulfide bond</keyword>
<keyword id="KW-0274">FAD</keyword>
<keyword id="KW-0285">Flavoprotein</keyword>
<keyword id="KW-0325">Glycoprotein</keyword>
<keyword id="KW-1199">Hemostasis impairing toxin</keyword>
<keyword id="KW-0560">Oxidoreductase</keyword>
<keyword id="KW-1202">Platelet aggregation activating toxin</keyword>
<keyword id="KW-0964">Secreted</keyword>
<keyword id="KW-0732">Signal</keyword>
<keyword id="KW-0800">Toxin</keyword>
<name>OXLAA_CERCE</name>
<protein>
    <recommendedName>
        <fullName>L-amino acid oxidase</fullName>
    </recommendedName>
    <alternativeName>
        <fullName evidence="9">CC-LAAO</fullName>
        <shortName>LAO</shortName>
        <ecNumber evidence="7">1.4.3.2</ecNumber>
    </alternativeName>
</protein>
<reference key="1">
    <citation type="journal article" date="2014" name="Toxicon">
        <title>A thermoactive L-amino acid oxidase from Cerastes cerastes snake venom: purification, biochemical and molecular characterization.</title>
        <authorList>
            <person name="Abdelkafi-Koubaa Z."/>
            <person name="Jebali J."/>
            <person name="Othman H."/>
            <person name="Morjen M."/>
            <person name="Aissa I."/>
            <person name="Zouari-Kesentini R."/>
            <person name="Bazaa A."/>
            <person name="Ellefi A.A."/>
            <person name="Majdoub H."/>
            <person name="Srairi-Abid N."/>
            <person name="Gargouri Y."/>
            <person name="El Ayeb M."/>
            <person name="Marrakchi N."/>
        </authorList>
    </citation>
    <scope>NUCLEOTIDE SEQUENCE [MRNA]</scope>
    <scope>PROTEIN SEQUENCE OF 19-48</scope>
    <scope>FUNCTION</scope>
    <scope>CATALYTIC ACTIVITY</scope>
    <scope>ACTIVITY REGULATION</scope>
    <scope>BIOPHYSICOCHEMICAL PROPERTIES</scope>
    <scope>SUBCELLULAR LOCATION</scope>
    <scope>GLYCOSYLATION</scope>
    <scope>SUBUNIT</scope>
    <scope>SUBSTRATE SPECIFICITY</scope>
    <source>
        <tissue>Venom</tissue>
        <tissue>Venom gland</tissue>
    </source>
</reference>
<reference key="2">
    <citation type="journal article" date="2016" name="Int. J. Biol. Macromol.">
        <title>Interaction of a snake venom L-amino acid oxidase with different cell types membrane.</title>
        <authorList>
            <person name="Abdelkafi-Koubaa Z."/>
            <person name="Aissa I."/>
            <person name="Morjen M."/>
            <person name="Kharrat N."/>
            <person name="El Ayeb M."/>
            <person name="Gargouri Y."/>
            <person name="Srairi-Abid N."/>
            <person name="Marrakchi N."/>
        </authorList>
    </citation>
    <scope>FUNCTION</scope>
    <scope>INTERACTION WITH CELL MEMBRANES</scope>
</reference>
<comment type="function">
    <text evidence="2 7 8">Catalyzes an oxidative deamination of predominantly hydrophobic and aromatic L-amino acids, thus producing hydrogen peroxide that may contribute to the diverse toxic effects of this enzyme (PubMed:25009089). Is highly active on L-Met&gt;L-Leu&gt;L-Phe&gt;L-Trp=L-Ile (PubMed:25009089). Binds to the cell surface and enables the production of highly localized concentration of hydrogen peroxide in or near the binding interfaces (PubMed:26433175). Does not bind to phospholipids (PubMed:26433175). Induces platelet-rich plasma aggregation, shows cytotoxic effects on some cancer cell lines (B16-F10 (mouse melanoma), PC12 (rat pheochromocytoma), MCF-7 and MDA-MB-231 (human breast carcinoma)) and shows antibacterial activities against both Gram-positive and Gram-negative bacteria (PubMed:26433175). Also exhibits hemorrhage and edema (By similarity). Does not show cytotoxicity on erythrocytes and peripheral blood mononuclear cells (PubMed:26433175). Its effect on platelets is controversial, since it either induces aggregation or inhibits agonist-induced aggregation. These different effects are probably due to different experimental conditions.</text>
</comment>
<comment type="catalytic activity">
    <reaction evidence="7">
        <text>an L-alpha-amino acid + O2 + H2O = a 2-oxocarboxylate + H2O2 + NH4(+)</text>
        <dbReference type="Rhea" id="RHEA:13781"/>
        <dbReference type="ChEBI" id="CHEBI:15377"/>
        <dbReference type="ChEBI" id="CHEBI:15379"/>
        <dbReference type="ChEBI" id="CHEBI:16240"/>
        <dbReference type="ChEBI" id="CHEBI:28938"/>
        <dbReference type="ChEBI" id="CHEBI:35179"/>
        <dbReference type="ChEBI" id="CHEBI:59869"/>
        <dbReference type="EC" id="1.4.3.2"/>
    </reaction>
</comment>
<comment type="catalytic activity">
    <reaction evidence="7">
        <text>L-leucine + O2 + H2O = 4-methyl-2-oxopentanoate + H2O2 + NH4(+)</text>
        <dbReference type="Rhea" id="RHEA:60996"/>
        <dbReference type="ChEBI" id="CHEBI:15377"/>
        <dbReference type="ChEBI" id="CHEBI:15379"/>
        <dbReference type="ChEBI" id="CHEBI:16240"/>
        <dbReference type="ChEBI" id="CHEBI:17865"/>
        <dbReference type="ChEBI" id="CHEBI:28938"/>
        <dbReference type="ChEBI" id="CHEBI:57427"/>
    </reaction>
</comment>
<comment type="catalytic activity">
    <reaction evidence="7">
        <text>L-phenylalanine + O2 + H2O = 3-phenylpyruvate + H2O2 + NH4(+)</text>
        <dbReference type="Rhea" id="RHEA:61240"/>
        <dbReference type="ChEBI" id="CHEBI:15377"/>
        <dbReference type="ChEBI" id="CHEBI:15379"/>
        <dbReference type="ChEBI" id="CHEBI:16240"/>
        <dbReference type="ChEBI" id="CHEBI:18005"/>
        <dbReference type="ChEBI" id="CHEBI:28938"/>
        <dbReference type="ChEBI" id="CHEBI:58095"/>
    </reaction>
</comment>
<comment type="catalytic activity">
    <reaction evidence="7">
        <text>L-tryptophan + O2 + H2O = indole-3-pyruvate + H2O2 + NH4(+)</text>
        <dbReference type="Rhea" id="RHEA:61244"/>
        <dbReference type="ChEBI" id="CHEBI:15377"/>
        <dbReference type="ChEBI" id="CHEBI:15379"/>
        <dbReference type="ChEBI" id="CHEBI:16240"/>
        <dbReference type="ChEBI" id="CHEBI:17640"/>
        <dbReference type="ChEBI" id="CHEBI:28938"/>
        <dbReference type="ChEBI" id="CHEBI:57912"/>
    </reaction>
</comment>
<comment type="catalytic activity">
    <reaction evidence="7">
        <text>L-methionine + O2 + H2O = 4-methylsulfanyl-2-oxobutanoate + H2O2 + NH4(+)</text>
        <dbReference type="Rhea" id="RHEA:61236"/>
        <dbReference type="ChEBI" id="CHEBI:15377"/>
        <dbReference type="ChEBI" id="CHEBI:15379"/>
        <dbReference type="ChEBI" id="CHEBI:16240"/>
        <dbReference type="ChEBI" id="CHEBI:16723"/>
        <dbReference type="ChEBI" id="CHEBI:28938"/>
        <dbReference type="ChEBI" id="CHEBI:57844"/>
    </reaction>
</comment>
<comment type="catalytic activity">
    <reaction evidence="7">
        <text>L-isoleucine + O2 + H2O = (S)-3-methyl-2-oxopentanoate + H2O2 + NH4(+)</text>
        <dbReference type="Rhea" id="RHEA:61232"/>
        <dbReference type="ChEBI" id="CHEBI:15377"/>
        <dbReference type="ChEBI" id="CHEBI:15379"/>
        <dbReference type="ChEBI" id="CHEBI:16240"/>
        <dbReference type="ChEBI" id="CHEBI:28938"/>
        <dbReference type="ChEBI" id="CHEBI:35146"/>
        <dbReference type="ChEBI" id="CHEBI:58045"/>
    </reaction>
</comment>
<comment type="cofactor">
    <cofactor evidence="4">
        <name>FAD</name>
        <dbReference type="ChEBI" id="CHEBI:57692"/>
    </cofactor>
</comment>
<comment type="activity regulation">
    <text evidence="7">Inhibited by the substrate analog N-acetyl tryptophan.</text>
</comment>
<comment type="biophysicochemical properties">
    <kinetics>
        <KM evidence="7">0.1 mM for L-Met</KM>
        <KM evidence="7">0.25 mM for L-Leu</KM>
        <KM evidence="7">0.08 mM for L-Phe</KM>
    </kinetics>
    <phDependence>
        <text evidence="7">Optimum pH is 7.8.</text>
    </phDependence>
    <temperatureDependence>
        <text evidence="7">Optimum temperature is 50 degrees Celsius.</text>
    </temperatureDependence>
</comment>
<comment type="subunit">
    <text evidence="10">Homodimer; non-covalently linked.</text>
</comment>
<comment type="subcellular location">
    <subcellularLocation>
        <location evidence="7">Secreted</location>
    </subcellularLocation>
</comment>
<comment type="tissue specificity">
    <text evidence="10">Expressed by the venom gland.</text>
</comment>
<comment type="PTM">
    <text evidence="7">N-glycosylated (14%). The enzymatic activity remains unchanged after deglycosylation.</text>
</comment>
<comment type="miscellaneous">
    <text evidence="3">Two L-amino-acid oxidase isoforms from C.cerastes venom have been described: Cc-LAAOI and Cc-LAAOII. It is unknown which isoform is presented here.</text>
</comment>
<comment type="similarity">
    <text evidence="1">Belongs to the flavin monoamine oxidase family. FIG1 subfamily.</text>
</comment>
<comment type="caution">
    <text evidence="10">Lacks two of the six Cys residues found in other family members, resulting in the loss of one disulfide bond.</text>
</comment>
<organism>
    <name type="scientific">Cerastes cerastes</name>
    <name type="common">Horned desert viper</name>
    <dbReference type="NCBI Taxonomy" id="8697"/>
    <lineage>
        <taxon>Eukaryota</taxon>
        <taxon>Metazoa</taxon>
        <taxon>Chordata</taxon>
        <taxon>Craniata</taxon>
        <taxon>Vertebrata</taxon>
        <taxon>Euteleostomi</taxon>
        <taxon>Lepidosauria</taxon>
        <taxon>Squamata</taxon>
        <taxon>Bifurcata</taxon>
        <taxon>Unidentata</taxon>
        <taxon>Episquamata</taxon>
        <taxon>Toxicofera</taxon>
        <taxon>Serpentes</taxon>
        <taxon>Colubroidea</taxon>
        <taxon>Viperidae</taxon>
        <taxon>Viperinae</taxon>
        <taxon>Cerastes</taxon>
    </lineage>
</organism>
<feature type="signal peptide" evidence="7">
    <location>
        <begin position="1"/>
        <end position="18"/>
    </location>
</feature>
<feature type="chain" id="PRO_0000430749" description="L-amino acid oxidase">
    <location>
        <begin position="19"/>
        <end position="516"/>
    </location>
</feature>
<feature type="binding site" evidence="5">
    <location>
        <begin position="61"/>
        <end position="62"/>
    </location>
    <ligand>
        <name>FAD</name>
        <dbReference type="ChEBI" id="CHEBI:57692"/>
    </ligand>
</feature>
<feature type="binding site" evidence="5">
    <location>
        <begin position="81"/>
        <end position="82"/>
    </location>
    <ligand>
        <name>FAD</name>
        <dbReference type="ChEBI" id="CHEBI:57692"/>
    </ligand>
</feature>
<feature type="binding site" evidence="5">
    <location>
        <position position="89"/>
    </location>
    <ligand>
        <name>FAD</name>
        <dbReference type="ChEBI" id="CHEBI:57692"/>
    </ligand>
</feature>
<feature type="binding site" evidence="5">
    <location>
        <begin position="105"/>
        <end position="108"/>
    </location>
    <ligand>
        <name>FAD</name>
        <dbReference type="ChEBI" id="CHEBI:57692"/>
    </ligand>
</feature>
<feature type="binding site" evidence="5">
    <location>
        <position position="108"/>
    </location>
    <ligand>
        <name>substrate</name>
    </ligand>
</feature>
<feature type="binding site" evidence="5">
    <location>
        <position position="279"/>
    </location>
    <ligand>
        <name>FAD</name>
        <dbReference type="ChEBI" id="CHEBI:57692"/>
    </ligand>
</feature>
<feature type="binding site" evidence="5">
    <location>
        <position position="475"/>
    </location>
    <ligand>
        <name>FAD</name>
        <dbReference type="ChEBI" id="CHEBI:57692"/>
    </ligand>
</feature>
<feature type="binding site" evidence="5">
    <location>
        <begin position="482"/>
        <end position="487"/>
    </location>
    <ligand>
        <name>FAD</name>
        <dbReference type="ChEBI" id="CHEBI:57692"/>
    </ligand>
</feature>
<feature type="binding site" evidence="5">
    <location>
        <begin position="482"/>
        <end position="483"/>
    </location>
    <ligand>
        <name>substrate</name>
    </ligand>
</feature>
<feature type="glycosylation site" description="N-linked (GlcNAc...) asparagine" evidence="6">
    <location>
        <position position="190"/>
    </location>
</feature>
<feature type="glycosylation site" description="N-linked (GlcNAc...) asparagine" evidence="6">
    <location>
        <position position="299"/>
    </location>
</feature>
<feature type="glycosylation site" description="N-linked (GlcNAc...) asparagine" evidence="6">
    <location>
        <position position="404"/>
    </location>
</feature>
<feature type="disulfide bond" evidence="5">
    <location>
        <begin position="349"/>
        <end position="430"/>
    </location>
</feature>
<proteinExistence type="evidence at protein level"/>
<accession>X2JCV5</accession>
<dbReference type="EC" id="1.4.3.2" evidence="7"/>
<dbReference type="EMBL" id="KJ028110">
    <property type="protein sequence ID" value="AHN53388.1"/>
    <property type="molecule type" value="mRNA"/>
</dbReference>
<dbReference type="SMR" id="X2JCV5"/>
<dbReference type="BRENDA" id="1.4.3.2">
    <property type="organism ID" value="1251"/>
</dbReference>
<dbReference type="GO" id="GO:0005576">
    <property type="term" value="C:extracellular region"/>
    <property type="evidence" value="ECO:0007669"/>
    <property type="project" value="UniProtKB-SubCell"/>
</dbReference>
<dbReference type="GO" id="GO:0106329">
    <property type="term" value="F:L-phenylalaine oxidase activity"/>
    <property type="evidence" value="ECO:0007669"/>
    <property type="project" value="RHEA"/>
</dbReference>
<dbReference type="GO" id="GO:0090729">
    <property type="term" value="F:toxin activity"/>
    <property type="evidence" value="ECO:0007669"/>
    <property type="project" value="UniProtKB-KW"/>
</dbReference>
<dbReference type="GO" id="GO:0009063">
    <property type="term" value="P:amino acid catabolic process"/>
    <property type="evidence" value="ECO:0007669"/>
    <property type="project" value="TreeGrafter"/>
</dbReference>
<dbReference type="GO" id="GO:0042742">
    <property type="term" value="P:defense response to bacterium"/>
    <property type="evidence" value="ECO:0007669"/>
    <property type="project" value="UniProtKB-KW"/>
</dbReference>
<dbReference type="FunFam" id="1.10.405.10:FF:000004">
    <property type="entry name" value="Amine oxidase"/>
    <property type="match status" value="1"/>
</dbReference>
<dbReference type="FunFam" id="3.50.50.60:FF:000450">
    <property type="entry name" value="Amine oxidase"/>
    <property type="match status" value="1"/>
</dbReference>
<dbReference type="Gene3D" id="3.90.660.10">
    <property type="match status" value="1"/>
</dbReference>
<dbReference type="Gene3D" id="3.50.50.60">
    <property type="entry name" value="FAD/NAD(P)-binding domain"/>
    <property type="match status" value="1"/>
</dbReference>
<dbReference type="Gene3D" id="1.10.405.10">
    <property type="entry name" value="Guanine Nucleotide Dissociation Inhibitor, domain 1"/>
    <property type="match status" value="1"/>
</dbReference>
<dbReference type="InterPro" id="IPR002937">
    <property type="entry name" value="Amino_oxidase"/>
</dbReference>
<dbReference type="InterPro" id="IPR036188">
    <property type="entry name" value="FAD/NAD-bd_sf"/>
</dbReference>
<dbReference type="InterPro" id="IPR001613">
    <property type="entry name" value="Flavin_amine_oxidase"/>
</dbReference>
<dbReference type="InterPro" id="IPR050281">
    <property type="entry name" value="Flavin_monoamine_oxidase"/>
</dbReference>
<dbReference type="PANTHER" id="PTHR10742:SF355">
    <property type="entry name" value="AMINE OXIDASE"/>
    <property type="match status" value="1"/>
</dbReference>
<dbReference type="PANTHER" id="PTHR10742">
    <property type="entry name" value="FLAVIN MONOAMINE OXIDASE"/>
    <property type="match status" value="1"/>
</dbReference>
<dbReference type="Pfam" id="PF01593">
    <property type="entry name" value="Amino_oxidase"/>
    <property type="match status" value="1"/>
</dbReference>
<dbReference type="PRINTS" id="PR00757">
    <property type="entry name" value="AMINEOXDASEF"/>
</dbReference>
<dbReference type="SUPFAM" id="SSF54373">
    <property type="entry name" value="FAD-linked reductases, C-terminal domain"/>
    <property type="match status" value="1"/>
</dbReference>
<dbReference type="SUPFAM" id="SSF51905">
    <property type="entry name" value="FAD/NAD(P)-binding domain"/>
    <property type="match status" value="1"/>
</dbReference>